<dbReference type="EMBL" id="X66980">
    <property type="protein sequence ID" value="CAA47390.1"/>
    <property type="molecule type" value="Genomic_DNA"/>
</dbReference>
<dbReference type="EMBL" id="Z73198">
    <property type="protein sequence ID" value="CAA97549.1"/>
    <property type="molecule type" value="Genomic_DNA"/>
</dbReference>
<dbReference type="EMBL" id="BK006945">
    <property type="protein sequence ID" value="DAA09344.1"/>
    <property type="molecule type" value="Genomic_DNA"/>
</dbReference>
<dbReference type="PIR" id="A44019">
    <property type="entry name" value="A44019"/>
</dbReference>
<dbReference type="RefSeq" id="NP_013126.1">
    <property type="nucleotide sequence ID" value="NM_001181913.1"/>
</dbReference>
<dbReference type="PDB" id="1MQS">
    <property type="method" value="X-ray"/>
    <property type="resolution" value="3.00 A"/>
    <property type="chains" value="B=1-45"/>
</dbReference>
<dbReference type="PDB" id="1PD0">
    <property type="method" value="X-ray"/>
    <property type="resolution" value="2.60 A"/>
    <property type="chains" value="B=201-210"/>
</dbReference>
<dbReference type="PDBsum" id="1MQS"/>
<dbReference type="PDBsum" id="1PD0"/>
<dbReference type="BMRB" id="Q01590"/>
<dbReference type="SMR" id="Q01590"/>
<dbReference type="BioGRID" id="31300">
    <property type="interactions" value="506"/>
</dbReference>
<dbReference type="ComplexPortal" id="CPX-1854">
    <property type="entry name" value="Golgi SNARE complex SED5-BOS1-BET1-SEC22"/>
</dbReference>
<dbReference type="ComplexPortal" id="CPX-1855">
    <property type="entry name" value="Golgi SNARE complex SED5-GOS1-SFT1-YKT6"/>
</dbReference>
<dbReference type="DIP" id="DIP-2489N"/>
<dbReference type="FunCoup" id="Q01590">
    <property type="interactions" value="898"/>
</dbReference>
<dbReference type="IntAct" id="Q01590">
    <property type="interactions" value="18"/>
</dbReference>
<dbReference type="MINT" id="Q01590"/>
<dbReference type="STRING" id="4932.YLR026C"/>
<dbReference type="TCDB" id="8.A.91.1.10">
    <property type="family name" value="the syntaxin (syntaxin) family"/>
</dbReference>
<dbReference type="iPTMnet" id="Q01590"/>
<dbReference type="PaxDb" id="4932-YLR026C"/>
<dbReference type="PeptideAtlas" id="Q01590"/>
<dbReference type="EnsemblFungi" id="YLR026C_mRNA">
    <property type="protein sequence ID" value="YLR026C"/>
    <property type="gene ID" value="YLR026C"/>
</dbReference>
<dbReference type="GeneID" id="850713"/>
<dbReference type="KEGG" id="sce:YLR026C"/>
<dbReference type="AGR" id="SGD:S000004016"/>
<dbReference type="SGD" id="S000004016">
    <property type="gene designation" value="SED5"/>
</dbReference>
<dbReference type="VEuPathDB" id="FungiDB:YLR026C"/>
<dbReference type="eggNOG" id="KOG0812">
    <property type="taxonomic scope" value="Eukaryota"/>
</dbReference>
<dbReference type="GeneTree" id="ENSGT01000000214440"/>
<dbReference type="HOGENOM" id="CLU_044998_0_1_1"/>
<dbReference type="InParanoid" id="Q01590"/>
<dbReference type="OMA" id="EHNHNVV"/>
<dbReference type="OrthoDB" id="421009at2759"/>
<dbReference type="BioCyc" id="YEAST:G3O-32187-MONOMER"/>
<dbReference type="Reactome" id="R-SCE-204005">
    <property type="pathway name" value="COPII-mediated vesicle transport"/>
</dbReference>
<dbReference type="Reactome" id="R-SCE-5694530">
    <property type="pathway name" value="Cargo concentration in the ER"/>
</dbReference>
<dbReference type="Reactome" id="R-SCE-6807878">
    <property type="pathway name" value="COPI-mediated anterograde transport"/>
</dbReference>
<dbReference type="Reactome" id="R-SCE-6811438">
    <property type="pathway name" value="Intra-Golgi traffic"/>
</dbReference>
<dbReference type="Reactome" id="R-SCE-9013106">
    <property type="pathway name" value="RHOC GTPase cycle"/>
</dbReference>
<dbReference type="Reactome" id="R-SCE-9609523">
    <property type="pathway name" value="Insertion of tail-anchored proteins into the endoplasmic reticulum membrane"/>
</dbReference>
<dbReference type="BioGRID-ORCS" id="850713">
    <property type="hits" value="4 hits in 10 CRISPR screens"/>
</dbReference>
<dbReference type="EvolutionaryTrace" id="Q01590"/>
<dbReference type="PRO" id="PR:Q01590"/>
<dbReference type="Proteomes" id="UP000002311">
    <property type="component" value="Chromosome XII"/>
</dbReference>
<dbReference type="RNAct" id="Q01590">
    <property type="molecule type" value="protein"/>
</dbReference>
<dbReference type="GO" id="GO:0005801">
    <property type="term" value="C:cis-Golgi network"/>
    <property type="evidence" value="ECO:0000314"/>
    <property type="project" value="SGD"/>
</dbReference>
<dbReference type="GO" id="GO:0012505">
    <property type="term" value="C:endomembrane system"/>
    <property type="evidence" value="ECO:0000318"/>
    <property type="project" value="GO_Central"/>
</dbReference>
<dbReference type="GO" id="GO:0005789">
    <property type="term" value="C:endoplasmic reticulum membrane"/>
    <property type="evidence" value="ECO:0000303"/>
    <property type="project" value="ComplexPortal"/>
</dbReference>
<dbReference type="GO" id="GO:1990674">
    <property type="term" value="C:Golgi cis cisterna membrane"/>
    <property type="evidence" value="ECO:0000303"/>
    <property type="project" value="ComplexPortal"/>
</dbReference>
<dbReference type="GO" id="GO:0000139">
    <property type="term" value="C:Golgi membrane"/>
    <property type="evidence" value="ECO:0000318"/>
    <property type="project" value="GO_Central"/>
</dbReference>
<dbReference type="GO" id="GO:0016020">
    <property type="term" value="C:membrane"/>
    <property type="evidence" value="ECO:0000314"/>
    <property type="project" value="SGD"/>
</dbReference>
<dbReference type="GO" id="GO:0031201">
    <property type="term" value="C:SNARE complex"/>
    <property type="evidence" value="ECO:0000314"/>
    <property type="project" value="SGD"/>
</dbReference>
<dbReference type="GO" id="GO:0005484">
    <property type="term" value="F:SNAP receptor activity"/>
    <property type="evidence" value="ECO:0000314"/>
    <property type="project" value="SGD"/>
</dbReference>
<dbReference type="GO" id="GO:0000149">
    <property type="term" value="F:SNARE binding"/>
    <property type="evidence" value="ECO:0000318"/>
    <property type="project" value="GO_Central"/>
</dbReference>
<dbReference type="GO" id="GO:0006888">
    <property type="term" value="P:endoplasmic reticulum to Golgi vesicle-mediated transport"/>
    <property type="evidence" value="ECO:0000314"/>
    <property type="project" value="CACAO"/>
</dbReference>
<dbReference type="GO" id="GO:0006891">
    <property type="term" value="P:intra-Golgi vesicle-mediated transport"/>
    <property type="evidence" value="ECO:0000315"/>
    <property type="project" value="SGD"/>
</dbReference>
<dbReference type="GO" id="GO:0006886">
    <property type="term" value="P:intracellular protein transport"/>
    <property type="evidence" value="ECO:0000314"/>
    <property type="project" value="ComplexPortal"/>
</dbReference>
<dbReference type="GO" id="GO:0090083">
    <property type="term" value="P:regulation of inclusion body assembly"/>
    <property type="evidence" value="ECO:0000314"/>
    <property type="project" value="SGD"/>
</dbReference>
<dbReference type="GO" id="GO:0048278">
    <property type="term" value="P:vesicle docking"/>
    <property type="evidence" value="ECO:0000318"/>
    <property type="project" value="GO_Central"/>
</dbReference>
<dbReference type="GO" id="GO:0006906">
    <property type="term" value="P:vesicle fusion"/>
    <property type="evidence" value="ECO:0000314"/>
    <property type="project" value="SGD"/>
</dbReference>
<dbReference type="GO" id="GO:0048280">
    <property type="term" value="P:vesicle fusion with Golgi apparatus"/>
    <property type="evidence" value="ECO:0000314"/>
    <property type="project" value="ComplexPortal"/>
</dbReference>
<dbReference type="CDD" id="cd15844">
    <property type="entry name" value="SNARE_syntaxin5"/>
    <property type="match status" value="1"/>
</dbReference>
<dbReference type="Gene3D" id="1.20.58.70">
    <property type="match status" value="1"/>
</dbReference>
<dbReference type="InterPro" id="IPR010989">
    <property type="entry name" value="SNARE"/>
</dbReference>
<dbReference type="InterPro" id="IPR045242">
    <property type="entry name" value="Syntaxin"/>
</dbReference>
<dbReference type="InterPro" id="IPR021538">
    <property type="entry name" value="Syntaxin-5_N"/>
</dbReference>
<dbReference type="InterPro" id="IPR006012">
    <property type="entry name" value="Syntaxin/epimorphin_CS"/>
</dbReference>
<dbReference type="InterPro" id="IPR000727">
    <property type="entry name" value="T_SNARE_dom"/>
</dbReference>
<dbReference type="PANTHER" id="PTHR19957">
    <property type="entry name" value="SYNTAXIN"/>
    <property type="match status" value="1"/>
</dbReference>
<dbReference type="PANTHER" id="PTHR19957:SF3">
    <property type="entry name" value="SYNTAXIN-5"/>
    <property type="match status" value="1"/>
</dbReference>
<dbReference type="Pfam" id="PF05739">
    <property type="entry name" value="SNARE"/>
    <property type="match status" value="1"/>
</dbReference>
<dbReference type="Pfam" id="PF11416">
    <property type="entry name" value="Syntaxin-5_N"/>
    <property type="match status" value="1"/>
</dbReference>
<dbReference type="SMART" id="SM00397">
    <property type="entry name" value="t_SNARE"/>
    <property type="match status" value="1"/>
</dbReference>
<dbReference type="SUPFAM" id="SSF47661">
    <property type="entry name" value="t-snare proteins"/>
    <property type="match status" value="1"/>
</dbReference>
<dbReference type="PROSITE" id="PS00914">
    <property type="entry name" value="SYNTAXIN"/>
    <property type="match status" value="1"/>
</dbReference>
<dbReference type="PROSITE" id="PS50192">
    <property type="entry name" value="T_SNARE"/>
    <property type="match status" value="1"/>
</dbReference>
<proteinExistence type="evidence at protein level"/>
<gene>
    <name type="primary">SED5</name>
    <name type="ordered locus">YLR026C</name>
</gene>
<evidence type="ECO:0000255" key="1"/>
<evidence type="ECO:0000255" key="2">
    <source>
        <dbReference type="PROSITE-ProRule" id="PRU00202"/>
    </source>
</evidence>
<evidence type="ECO:0000256" key="3">
    <source>
        <dbReference type="SAM" id="MobiDB-lite"/>
    </source>
</evidence>
<evidence type="ECO:0000269" key="4">
    <source>
    </source>
</evidence>
<evidence type="ECO:0000269" key="5">
    <source>
    </source>
</evidence>
<evidence type="ECO:0000269" key="6">
    <source>
    </source>
</evidence>
<evidence type="ECO:0000269" key="7">
    <source>
    </source>
</evidence>
<evidence type="ECO:0000305" key="8"/>
<evidence type="ECO:0007829" key="9">
    <source>
        <dbReference type="PDB" id="1MQS"/>
    </source>
</evidence>
<protein>
    <recommendedName>
        <fullName>Integral membrane protein SED5</fullName>
    </recommendedName>
</protein>
<name>SED5_YEAST</name>
<accession>Q01590</accession>
<accession>D6VY28</accession>
<sequence length="340" mass="38807">MNIKDRTSEFQQSVLSYKKRNKNFREQQRERLQEKESENFANNTTGNGKSVSEFQKKASGIAHEISSTAQLLSKLAVLAKRKPMFNDNPVEIAELSFLIKRKIYAIEQSLVQLSQLKKTDVNGNTSNQSSKQPSAVQHSKNVVNLLNTQMKNISGSFKDVLEERQRLEMANKDRWQKLTTDTGHAPADDQTQSNHAADLTTYNNSNPFMTSLLDESSEKNNNSSNQGELSFPQNDSQLMLMEEGQLSNNVYLQERNRAVETIESTIQEVGNLFQQLASMVQEQGEVIQRIDANVDDIDLNISGAQRELLKYFDRIKSNRWLAAKVFFIIFVFFVIWVLVN</sequence>
<keyword id="KW-0002">3D-structure</keyword>
<keyword id="KW-0175">Coiled coil</keyword>
<keyword id="KW-0333">Golgi apparatus</keyword>
<keyword id="KW-0472">Membrane</keyword>
<keyword id="KW-0653">Protein transport</keyword>
<keyword id="KW-1185">Reference proteome</keyword>
<keyword id="KW-0812">Transmembrane</keyword>
<keyword id="KW-1133">Transmembrane helix</keyword>
<keyword id="KW-0813">Transport</keyword>
<reference key="1">
    <citation type="journal article" date="1992" name="J. Cell Biol.">
        <title>SED5 encodes a 39-kD integral membrane protein required for vesicular transport between the ER and the Golgi complex.</title>
        <authorList>
            <person name="Hardwick K.G."/>
            <person name="Pelham H.R.B."/>
        </authorList>
    </citation>
    <scope>NUCLEOTIDE SEQUENCE [GENOMIC DNA]</scope>
</reference>
<reference key="2">
    <citation type="journal article" date="1997" name="Nature">
        <title>The nucleotide sequence of Saccharomyces cerevisiae chromosome XII.</title>
        <authorList>
            <person name="Johnston M."/>
            <person name="Hillier L.W."/>
            <person name="Riles L."/>
            <person name="Albermann K."/>
            <person name="Andre B."/>
            <person name="Ansorge W."/>
            <person name="Benes V."/>
            <person name="Brueckner M."/>
            <person name="Delius H."/>
            <person name="Dubois E."/>
            <person name="Duesterhoeft A."/>
            <person name="Entian K.-D."/>
            <person name="Floeth M."/>
            <person name="Goffeau A."/>
            <person name="Hebling U."/>
            <person name="Heumann K."/>
            <person name="Heuss-Neitzel D."/>
            <person name="Hilbert H."/>
            <person name="Hilger F."/>
            <person name="Kleine K."/>
            <person name="Koetter P."/>
            <person name="Louis E.J."/>
            <person name="Messenguy F."/>
            <person name="Mewes H.-W."/>
            <person name="Miosga T."/>
            <person name="Moestl D."/>
            <person name="Mueller-Auer S."/>
            <person name="Nentwich U."/>
            <person name="Obermaier B."/>
            <person name="Piravandi E."/>
            <person name="Pohl T.M."/>
            <person name="Portetelle D."/>
            <person name="Purnelle B."/>
            <person name="Rechmann S."/>
            <person name="Rieger M."/>
            <person name="Rinke M."/>
            <person name="Rose M."/>
            <person name="Scharfe M."/>
            <person name="Scherens B."/>
            <person name="Scholler P."/>
            <person name="Schwager C."/>
            <person name="Schwarz S."/>
            <person name="Underwood A.P."/>
            <person name="Urrestarazu L.A."/>
            <person name="Vandenbol M."/>
            <person name="Verhasselt P."/>
            <person name="Vierendeels F."/>
            <person name="Voet M."/>
            <person name="Volckaert G."/>
            <person name="Voss H."/>
            <person name="Wambutt R."/>
            <person name="Wedler E."/>
            <person name="Wedler H."/>
            <person name="Zimmermann F.K."/>
            <person name="Zollner A."/>
            <person name="Hani J."/>
            <person name="Hoheisel J.D."/>
        </authorList>
    </citation>
    <scope>NUCLEOTIDE SEQUENCE [LARGE SCALE GENOMIC DNA]</scope>
    <source>
        <strain>ATCC 204508 / S288c</strain>
    </source>
</reference>
<reference key="3">
    <citation type="journal article" date="2014" name="G3 (Bethesda)">
        <title>The reference genome sequence of Saccharomyces cerevisiae: Then and now.</title>
        <authorList>
            <person name="Engel S.R."/>
            <person name="Dietrich F.S."/>
            <person name="Fisk D.G."/>
            <person name="Binkley G."/>
            <person name="Balakrishnan R."/>
            <person name="Costanzo M.C."/>
            <person name="Dwight S.S."/>
            <person name="Hitz B.C."/>
            <person name="Karra K."/>
            <person name="Nash R.S."/>
            <person name="Weng S."/>
            <person name="Wong E.D."/>
            <person name="Lloyd P."/>
            <person name="Skrzypek M.S."/>
            <person name="Miyasato S.R."/>
            <person name="Simison M."/>
            <person name="Cherry J.M."/>
        </authorList>
    </citation>
    <scope>GENOME REANNOTATION</scope>
    <source>
        <strain>ATCC 204508 / S288c</strain>
    </source>
</reference>
<reference key="4">
    <citation type="journal article" date="1998" name="FEBS Lett.">
        <title>Gos1p, a Saccharomyces cerevisiae SNARE protein involved in Golgi transport.</title>
        <authorList>
            <person name="McNew J.A."/>
            <person name="Coe J.G.S."/>
            <person name="Sogaard M."/>
            <person name="Zemelman B.V."/>
            <person name="Wimmer C."/>
            <person name="Hong W."/>
            <person name="Soellner T.H."/>
        </authorList>
    </citation>
    <scope>INTERACTION WITH GOS1</scope>
</reference>
<reference key="5">
    <citation type="journal article" date="2003" name="Cell">
        <title>SNARE selectivity of the COPII coat.</title>
        <authorList>
            <person name="Mossessova E."/>
            <person name="Bickford L.C."/>
            <person name="Goldberg J."/>
        </authorList>
    </citation>
    <scope>INTERACTION WITH SEC24</scope>
    <scope>MUTAGENESIS OF ASN-206</scope>
</reference>
<reference key="6">
    <citation type="journal article" date="2003" name="Nature">
        <title>Global analysis of protein expression in yeast.</title>
        <authorList>
            <person name="Ghaemmaghami S."/>
            <person name="Huh W.-K."/>
            <person name="Bower K."/>
            <person name="Howson R.W."/>
            <person name="Belle A."/>
            <person name="Dephoure N."/>
            <person name="O'Shea E.K."/>
            <person name="Weissman J.S."/>
        </authorList>
    </citation>
    <scope>LEVEL OF PROTEIN EXPRESSION [LARGE SCALE ANALYSIS]</scope>
</reference>
<reference key="7">
    <citation type="journal article" date="2002" name="EMBO J.">
        <title>Structural basis for the Golgi membrane recruitment of Sly1p by Sed5p.</title>
        <authorList>
            <person name="Bracher A."/>
            <person name="Weissenhorn W."/>
        </authorList>
    </citation>
    <scope>X-RAY CRYSTALLOGRAPHY (3.0 ANGSTROMS) OF 1-45 IN COMPLEX WITH SLY1</scope>
</reference>
<organism>
    <name type="scientific">Saccharomyces cerevisiae (strain ATCC 204508 / S288c)</name>
    <name type="common">Baker's yeast</name>
    <dbReference type="NCBI Taxonomy" id="559292"/>
    <lineage>
        <taxon>Eukaryota</taxon>
        <taxon>Fungi</taxon>
        <taxon>Dikarya</taxon>
        <taxon>Ascomycota</taxon>
        <taxon>Saccharomycotina</taxon>
        <taxon>Saccharomycetes</taxon>
        <taxon>Saccharomycetales</taxon>
        <taxon>Saccharomycetaceae</taxon>
        <taxon>Saccharomyces</taxon>
    </lineage>
</organism>
<feature type="chain" id="PRO_0000210273" description="Integral membrane protein SED5">
    <location>
        <begin position="1"/>
        <end position="340"/>
    </location>
</feature>
<feature type="topological domain" description="Cytoplasmic" evidence="1">
    <location>
        <begin position="1"/>
        <end position="319"/>
    </location>
</feature>
<feature type="transmembrane region" description="Helical; Anchor for type IV membrane protein" evidence="1">
    <location>
        <begin position="320"/>
        <end position="340"/>
    </location>
</feature>
<feature type="domain" description="t-SNARE coiled-coil homology" evidence="2">
    <location>
        <begin position="249"/>
        <end position="311"/>
    </location>
</feature>
<feature type="region of interest" description="Disordered" evidence="3">
    <location>
        <begin position="31"/>
        <end position="51"/>
    </location>
</feature>
<feature type="region of interest" description="Disordered" evidence="3">
    <location>
        <begin position="180"/>
        <end position="231"/>
    </location>
</feature>
<feature type="coiled-coil region" evidence="1">
    <location>
        <begin position="146"/>
        <end position="173"/>
    </location>
</feature>
<feature type="compositionally biased region" description="Polar residues" evidence="3">
    <location>
        <begin position="39"/>
        <end position="51"/>
    </location>
</feature>
<feature type="compositionally biased region" description="Polar residues" evidence="3">
    <location>
        <begin position="189"/>
        <end position="209"/>
    </location>
</feature>
<feature type="mutagenesis site" description="Loss of interaction with SEC23/SEC24 complex." evidence="5">
    <original>N</original>
    <variation>A</variation>
    <location>
        <position position="206"/>
    </location>
</feature>
<feature type="helix" evidence="9">
    <location>
        <begin position="1"/>
        <end position="4"/>
    </location>
</feature>
<feature type="helix" evidence="9">
    <location>
        <begin position="7"/>
        <end position="20"/>
    </location>
</feature>
<comment type="function">
    <text>Required for vesicular transport between the endoplasmic reticulum and the Golgi complex. Acts as a target organelle soluble NSF attachment protein receptor (t-SNARE).</text>
</comment>
<comment type="subunit">
    <text evidence="4 5 7">Interacts with SLY1, STF1, SFB3 and GOS1.</text>
</comment>
<comment type="interaction">
    <interactant intactId="EBI-16930">
        <id>Q01590</id>
    </interactant>
    <interactant intactId="EBI-16614">
        <id>P53271</id>
        <label>COG2</label>
    </interactant>
    <organismsDiffer>false</organismsDiffer>
    <experiments>2</experiments>
</comment>
<comment type="interaction">
    <interactant intactId="EBI-16930">
        <id>Q01590</id>
    </interactant>
    <interactant intactId="EBI-16605">
        <id>P40094</id>
        <label>COG3</label>
    </interactant>
    <organismsDiffer>false</organismsDiffer>
    <experiments>4</experiments>
</comment>
<comment type="interaction">
    <interactant intactId="EBI-16930">
        <id>Q01590</id>
    </interactant>
    <interactant intactId="EBI-24365">
        <id>P38736</id>
        <label>GOS1</label>
    </interactant>
    <organismsDiffer>false</organismsDiffer>
    <experiments>6</experiments>
</comment>
<comment type="interaction">
    <interactant intactId="EBI-16930">
        <id>Q01590</id>
    </interactant>
    <interactant intactId="EBI-16577">
        <id>P22214</id>
        <label>SEC22</label>
    </interactant>
    <organismsDiffer>false</organismsDiffer>
    <experiments>13</experiments>
</comment>
<comment type="interaction">
    <interactant intactId="EBI-16930">
        <id>Q01590</id>
    </interactant>
    <interactant intactId="EBI-17040">
        <id>P43682</id>
        <label>SFT1</label>
    </interactant>
    <organismsDiffer>false</organismsDiffer>
    <experiments>2</experiments>
</comment>
<comment type="interaction">
    <interactant intactId="EBI-16930">
        <id>Q01590</id>
    </interactant>
    <interactant intactId="EBI-17387">
        <id>P22213</id>
        <label>SLY1</label>
    </interactant>
    <organismsDiffer>false</organismsDiffer>
    <experiments>6</experiments>
</comment>
<comment type="interaction">
    <interactant intactId="EBI-16930">
        <id>Q01590</id>
    </interactant>
    <interactant intactId="EBI-20519">
        <id>Q04338</id>
        <label>VTI1</label>
    </interactant>
    <organismsDiffer>false</organismsDiffer>
    <experiments>2</experiments>
</comment>
<comment type="interaction">
    <interactant intactId="EBI-16930">
        <id>Q01590</id>
    </interactant>
    <interactant intactId="EBI-29496">
        <id>P01123</id>
        <label>YPT1</label>
    </interactant>
    <organismsDiffer>false</organismsDiffer>
    <experiments>3</experiments>
</comment>
<comment type="subcellular location">
    <subcellularLocation>
        <location evidence="8">Membrane</location>
        <topology evidence="8">Single-pass type IV membrane protein</topology>
    </subcellularLocation>
    <subcellularLocation>
        <location evidence="8">Golgi apparatus membrane</location>
        <topology evidence="8">Single-pass type IV membrane protein</topology>
    </subcellularLocation>
</comment>
<comment type="miscellaneous">
    <text evidence="6">Present with 300 molecules/cell in log phase SD medium.</text>
</comment>
<comment type="similarity">
    <text evidence="8">Belongs to the syntaxin family.</text>
</comment>